<gene>
    <name type="primary">Dpysl3</name>
    <name type="synonym">Drp3</name>
    <name type="synonym">Ulip</name>
</gene>
<name>DPYL3_MOUSE</name>
<proteinExistence type="evidence at protein level"/>
<keyword id="KW-0966">Cell projection</keyword>
<keyword id="KW-0963">Cytoplasm</keyword>
<keyword id="KW-0903">Direct protein sequencing</keyword>
<keyword id="KW-0597">Phosphoprotein</keyword>
<keyword id="KW-1185">Reference proteome</keyword>
<sequence length="570" mass="61936">MSYQGKKNIPRITSDRLLIKGGRIVNDDQSFYADIYMEDGLIKQIGDNLIVPGGVKTIEANGKMVIPGGIDVHTHFQMPYKGMTTVDDFFQGTKAALAGGTTMIIDHVVPEPESSLTEAYEKWREWADGKSCCDYALHVDITHWNDSVKQEVQSLSKEKGVNSFMVYMAYKDLYQVSNTELYEIFTCLGELGAIAQVHAENGDIIAQEQARMLEMGITGPEGHVLSRPEELEAEAVFRAITVASQTNCPLYVTKVMSKSAADLISQARKKGNVVFGEPITASLGIDGTHYWSKNWAKAAAFVTSPPLSPDPTTPDYINSLLASGDLQLSGSAHCTFSTAQKAIGKDNFTAIPEGTNGVEERMSVIWDKAVATGKMDENQFVAVTSTNAAKIFNLYPRKGRIAVGSDSDLVIWDPDALKIVSAKNHQSVAEYNIFEGMELRGAPLVVICQGKIMLEDGNLHVTQGAGRFIPCSPFSDYVYKRIKARRKMADLHAVPRGMYDGPVFDLTTTPKGGTPAGSTRGSPTRPNPPVRNLHQSGFSLSGTQVDEGVRSASKRIVAPPGGRSNITSLS</sequence>
<feature type="chain" id="PRO_0000165918" description="Dihydropyrimidinase-related protein 3">
    <location>
        <begin position="1"/>
        <end position="570"/>
    </location>
</feature>
<feature type="region of interest" description="Disordered" evidence="4">
    <location>
        <begin position="506"/>
        <end position="570"/>
    </location>
</feature>
<feature type="compositionally biased region" description="Polar residues" evidence="4">
    <location>
        <begin position="506"/>
        <end position="524"/>
    </location>
</feature>
<feature type="compositionally biased region" description="Polar residues" evidence="4">
    <location>
        <begin position="533"/>
        <end position="544"/>
    </location>
</feature>
<feature type="modified residue" description="Phosphoserine" evidence="8">
    <location>
        <position position="259"/>
    </location>
</feature>
<feature type="modified residue" description="Phosphotyrosine" evidence="6">
    <location>
        <position position="431"/>
    </location>
</feature>
<feature type="modified residue" description="Phosphotyrosine" evidence="8">
    <location>
        <position position="499"/>
    </location>
</feature>
<feature type="modified residue" description="Phosphothreonine" evidence="8">
    <location>
        <position position="509"/>
    </location>
</feature>
<feature type="modified residue" description="Phosphothreonine; by GSK3" evidence="7 8">
    <location>
        <position position="514"/>
    </location>
</feature>
<feature type="modified residue" description="Phosphoserine; by GSK3" evidence="7 8">
    <location>
        <position position="518"/>
    </location>
</feature>
<feature type="modified residue" description="Phosphoserine; by DYRK2" evidence="7">
    <location>
        <position position="522"/>
    </location>
</feature>
<feature type="modified residue" description="Phosphoserine" evidence="8">
    <location>
        <position position="536"/>
    </location>
</feature>
<feature type="modified residue" description="Phosphoserine" evidence="8">
    <location>
        <position position="539"/>
    </location>
</feature>
<feature type="modified residue" description="Phosphoserine" evidence="8">
    <location>
        <position position="541"/>
    </location>
</feature>
<feature type="modified residue" description="Phosphothreonine" evidence="8">
    <location>
        <position position="543"/>
    </location>
</feature>
<evidence type="ECO:0000250" key="1"/>
<evidence type="ECO:0000250" key="2">
    <source>
        <dbReference type="UniProtKB" id="Q14195"/>
    </source>
</evidence>
<evidence type="ECO:0000250" key="3">
    <source>
        <dbReference type="UniProtKB" id="Q62952"/>
    </source>
</evidence>
<evidence type="ECO:0000256" key="4">
    <source>
        <dbReference type="SAM" id="MobiDB-lite"/>
    </source>
</evidence>
<evidence type="ECO:0000305" key="5"/>
<evidence type="ECO:0007744" key="6">
    <source>
    </source>
</evidence>
<evidence type="ECO:0007744" key="7">
    <source>
    </source>
</evidence>
<evidence type="ECO:0007744" key="8">
    <source>
    </source>
</evidence>
<organism>
    <name type="scientific">Mus musculus</name>
    <name type="common">Mouse</name>
    <dbReference type="NCBI Taxonomy" id="10090"/>
    <lineage>
        <taxon>Eukaryota</taxon>
        <taxon>Metazoa</taxon>
        <taxon>Chordata</taxon>
        <taxon>Craniata</taxon>
        <taxon>Vertebrata</taxon>
        <taxon>Euteleostomi</taxon>
        <taxon>Mammalia</taxon>
        <taxon>Eutheria</taxon>
        <taxon>Euarchontoglires</taxon>
        <taxon>Glires</taxon>
        <taxon>Rodentia</taxon>
        <taxon>Myomorpha</taxon>
        <taxon>Muroidea</taxon>
        <taxon>Muridae</taxon>
        <taxon>Murinae</taxon>
        <taxon>Mus</taxon>
        <taxon>Mus</taxon>
    </lineage>
</organism>
<reference key="1">
    <citation type="journal article" date="1996" name="J. Neurosci.">
        <title>Identification and molecular characterization of Unc-33-like phosphoprotein (Ulip), a putative mammalian homolog of the axonal guidance-associated unc-33 gene product.</title>
        <authorList>
            <person name="Byk T."/>
            <person name="Dobransky T."/>
            <person name="Cifuentes-Diaz C."/>
            <person name="Sobel A."/>
        </authorList>
    </citation>
    <scope>NUCLEOTIDE SEQUENCE [MRNA]</scope>
    <source>
        <strain>BALB/cJ</strain>
        <tissue>Brain</tissue>
    </source>
</reference>
<reference key="2">
    <citation type="journal article" date="2004" name="Genome Res.">
        <title>The status, quality, and expansion of the NIH full-length cDNA project: the Mammalian Gene Collection (MGC).</title>
        <authorList>
            <consortium name="The MGC Project Team"/>
        </authorList>
    </citation>
    <scope>NUCLEOTIDE SEQUENCE [LARGE SCALE MRNA]</scope>
    <source>
        <strain>C57BL/6J</strain>
        <tissue>Retina</tissue>
    </source>
</reference>
<reference key="3">
    <citation type="submission" date="2007-07" db="UniProtKB">
        <authorList>
            <person name="Lubec G."/>
            <person name="Yang J.W."/>
            <person name="Zigmond M."/>
        </authorList>
    </citation>
    <scope>PROTEIN SEQUENCE OF 468-480</scope>
    <source>
        <tissue>Brain</tissue>
    </source>
</reference>
<reference key="4">
    <citation type="journal article" date="2000" name="J. Biol. Chem.">
        <title>Molecular characterization of CRMP5, a novel member of the collapsin response mediator protein family.</title>
        <authorList>
            <person name="Fukada M."/>
            <person name="Watakabe I."/>
            <person name="Yuasa-Kawada J."/>
            <person name="Kawachi H."/>
            <person name="Kuroiwa A."/>
            <person name="Matsuda Y."/>
            <person name="Noda M."/>
        </authorList>
    </citation>
    <scope>SUBUNIT</scope>
</reference>
<reference key="5">
    <citation type="journal article" date="2004" name="EMBO J.">
        <title>Structural bases for CRMP function in plexin-dependent semaphorin3A signaling.</title>
        <authorList>
            <person name="Deo R.C."/>
            <person name="Schmidt E.F."/>
            <person name="Elhabazi A."/>
            <person name="Togashi H."/>
            <person name="Burley S.K."/>
            <person name="Strittmatter S.M."/>
        </authorList>
    </citation>
    <scope>INTERACTION WITH PLEXA1</scope>
    <scope>SUBUNIT</scope>
</reference>
<reference key="6">
    <citation type="journal article" date="2004" name="Mol. Cell. Proteomics">
        <title>Phosphoproteomic analysis of the developing mouse brain.</title>
        <authorList>
            <person name="Ballif B.A."/>
            <person name="Villen J."/>
            <person name="Beausoleil S.A."/>
            <person name="Schwartz D."/>
            <person name="Gygi S.P."/>
        </authorList>
    </citation>
    <scope>IDENTIFICATION BY MASS SPECTROMETRY [LARGE SCALE ANALYSIS]</scope>
    <source>
        <tissue>Embryonic brain</tissue>
    </source>
</reference>
<reference key="7">
    <citation type="journal article" date="2008" name="J. Proteome Res.">
        <title>Large-scale identification and evolution indexing of tyrosine phosphorylation sites from murine brain.</title>
        <authorList>
            <person name="Ballif B.A."/>
            <person name="Carey G.R."/>
            <person name="Sunyaev S.R."/>
            <person name="Gygi S.P."/>
        </authorList>
    </citation>
    <scope>PHOSPHORYLATION [LARGE SCALE ANALYSIS] AT TYR-431</scope>
    <scope>IDENTIFICATION BY MASS SPECTROMETRY [LARGE SCALE ANALYSIS]</scope>
    <source>
        <tissue>Brain</tissue>
    </source>
</reference>
<reference key="8">
    <citation type="journal article" date="2009" name="Mol. Cell. Proteomics">
        <title>Large scale localization of protein phosphorylation by use of electron capture dissociation mass spectrometry.</title>
        <authorList>
            <person name="Sweet S.M."/>
            <person name="Bailey C.M."/>
            <person name="Cunningham D.L."/>
            <person name="Heath J.K."/>
            <person name="Cooper H.J."/>
        </authorList>
    </citation>
    <scope>PHOSPHORYLATION [LARGE SCALE ANALYSIS] AT THR-514; SER-518 AND SER-522</scope>
    <scope>IDENTIFICATION BY MASS SPECTROMETRY [LARGE SCALE ANALYSIS]</scope>
    <source>
        <tissue>Embryonic fibroblast</tissue>
    </source>
</reference>
<reference key="9">
    <citation type="journal article" date="2010" name="Cell">
        <title>A tissue-specific atlas of mouse protein phosphorylation and expression.</title>
        <authorList>
            <person name="Huttlin E.L."/>
            <person name="Jedrychowski M.P."/>
            <person name="Elias J.E."/>
            <person name="Goswami T."/>
            <person name="Rad R."/>
            <person name="Beausoleil S.A."/>
            <person name="Villen J."/>
            <person name="Haas W."/>
            <person name="Sowa M.E."/>
            <person name="Gygi S.P."/>
        </authorList>
    </citation>
    <scope>PHOSPHORYLATION [LARGE SCALE ANALYSIS] AT SER-259; TYR-499; THR-509; THR-514; SER-518; SER-536; SER-539; SER-541 AND THR-543</scope>
    <scope>IDENTIFICATION BY MASS SPECTROMETRY [LARGE SCALE ANALYSIS]</scope>
    <source>
        <tissue>Brain</tissue>
        <tissue>Brown adipose tissue</tissue>
        <tissue>Heart</tissue>
        <tissue>Kidney</tissue>
        <tissue>Liver</tissue>
        <tissue>Lung</tissue>
        <tissue>Pancreas</tissue>
        <tissue>Spleen</tissue>
        <tissue>Testis</tissue>
    </source>
</reference>
<dbReference type="EMBL" id="X87817">
    <property type="protein sequence ID" value="CAA61082.1"/>
    <property type="molecule type" value="mRNA"/>
</dbReference>
<dbReference type="EMBL" id="BC023003">
    <property type="protein sequence ID" value="AAH23003.1"/>
    <property type="molecule type" value="mRNA"/>
</dbReference>
<dbReference type="CCDS" id="CCDS37801.1"/>
<dbReference type="PIR" id="S55525">
    <property type="entry name" value="S55525"/>
</dbReference>
<dbReference type="RefSeq" id="NP_033494.1">
    <property type="nucleotide sequence ID" value="NM_009468.6"/>
</dbReference>
<dbReference type="SMR" id="Q62188"/>
<dbReference type="BioGRID" id="204437">
    <property type="interactions" value="16"/>
</dbReference>
<dbReference type="FunCoup" id="Q62188">
    <property type="interactions" value="756"/>
</dbReference>
<dbReference type="IntAct" id="Q62188">
    <property type="interactions" value="3"/>
</dbReference>
<dbReference type="MINT" id="Q62188"/>
<dbReference type="STRING" id="10090.ENSMUSP00000112928"/>
<dbReference type="ChEMBL" id="CHEMBL4879475"/>
<dbReference type="MEROPS" id="M38.976"/>
<dbReference type="GlyGen" id="Q62188">
    <property type="glycosylation" value="2 sites, 1 O-linked glycan (1 site)"/>
</dbReference>
<dbReference type="iPTMnet" id="Q62188"/>
<dbReference type="PhosphoSitePlus" id="Q62188"/>
<dbReference type="SwissPalm" id="Q62188"/>
<dbReference type="REPRODUCTION-2DPAGE" id="IPI00122349"/>
<dbReference type="REPRODUCTION-2DPAGE" id="Q62188"/>
<dbReference type="jPOST" id="Q62188"/>
<dbReference type="PaxDb" id="10090-ENSMUSP00000025379"/>
<dbReference type="PeptideAtlas" id="Q62188"/>
<dbReference type="ProteomicsDB" id="279483"/>
<dbReference type="Pumba" id="Q62188"/>
<dbReference type="Antibodypedia" id="1526">
    <property type="antibodies" value="296 antibodies from 29 providers"/>
</dbReference>
<dbReference type="DNASU" id="22240"/>
<dbReference type="Ensembl" id="ENSMUST00000025379.14">
    <property type="protein sequence ID" value="ENSMUSP00000025379.8"/>
    <property type="gene ID" value="ENSMUSG00000024501.21"/>
</dbReference>
<dbReference type="GeneID" id="22240"/>
<dbReference type="KEGG" id="mmu:22240"/>
<dbReference type="UCSC" id="uc008euh.3">
    <property type="organism name" value="mouse"/>
</dbReference>
<dbReference type="AGR" id="MGI:1349762"/>
<dbReference type="CTD" id="1809"/>
<dbReference type="MGI" id="MGI:1349762">
    <property type="gene designation" value="Dpysl3"/>
</dbReference>
<dbReference type="VEuPathDB" id="HostDB:ENSMUSG00000024501"/>
<dbReference type="eggNOG" id="KOG2584">
    <property type="taxonomic scope" value="Eukaryota"/>
</dbReference>
<dbReference type="GeneTree" id="ENSGT01030000234527"/>
<dbReference type="InParanoid" id="Q62188"/>
<dbReference type="OMA" id="WVTAEVT"/>
<dbReference type="OrthoDB" id="10258955at2759"/>
<dbReference type="PhylomeDB" id="Q62188"/>
<dbReference type="TreeFam" id="TF314706"/>
<dbReference type="Reactome" id="R-MMU-399956">
    <property type="pathway name" value="CRMPs in Sema3A signaling"/>
</dbReference>
<dbReference type="BioGRID-ORCS" id="22240">
    <property type="hits" value="3 hits in 78 CRISPR screens"/>
</dbReference>
<dbReference type="CD-CODE" id="CE726F99">
    <property type="entry name" value="Postsynaptic density"/>
</dbReference>
<dbReference type="ChiTaRS" id="Dpysl3">
    <property type="organism name" value="mouse"/>
</dbReference>
<dbReference type="PRO" id="PR:Q62188"/>
<dbReference type="Proteomes" id="UP000000589">
    <property type="component" value="Chromosome 18"/>
</dbReference>
<dbReference type="RNAct" id="Q62188">
    <property type="molecule type" value="protein"/>
</dbReference>
<dbReference type="Bgee" id="ENSMUSG00000024501">
    <property type="expression patterns" value="Expressed in superior cervical ganglion and 265 other cell types or tissues"/>
</dbReference>
<dbReference type="ExpressionAtlas" id="Q62188">
    <property type="expression patterns" value="baseline and differential"/>
</dbReference>
<dbReference type="GO" id="GO:0044297">
    <property type="term" value="C:cell body"/>
    <property type="evidence" value="ECO:0000250"/>
    <property type="project" value="UniProtKB"/>
</dbReference>
<dbReference type="GO" id="GO:0005829">
    <property type="term" value="C:cytosol"/>
    <property type="evidence" value="ECO:0000250"/>
    <property type="project" value="UniProtKB"/>
</dbReference>
<dbReference type="GO" id="GO:0070382">
    <property type="term" value="C:exocytic vesicle"/>
    <property type="evidence" value="ECO:0007669"/>
    <property type="project" value="Ensembl"/>
</dbReference>
<dbReference type="GO" id="GO:0005615">
    <property type="term" value="C:extracellular space"/>
    <property type="evidence" value="ECO:0000250"/>
    <property type="project" value="UniProtKB"/>
</dbReference>
<dbReference type="GO" id="GO:0031941">
    <property type="term" value="C:filamentous actin"/>
    <property type="evidence" value="ECO:0000250"/>
    <property type="project" value="UniProtKB"/>
</dbReference>
<dbReference type="GO" id="GO:0030426">
    <property type="term" value="C:growth cone"/>
    <property type="evidence" value="ECO:0000250"/>
    <property type="project" value="UniProtKB"/>
</dbReference>
<dbReference type="GO" id="GO:0030027">
    <property type="term" value="C:lamellipodium"/>
    <property type="evidence" value="ECO:0000250"/>
    <property type="project" value="UniProtKB"/>
</dbReference>
<dbReference type="GO" id="GO:0045202">
    <property type="term" value="C:synapse"/>
    <property type="evidence" value="ECO:0007669"/>
    <property type="project" value="Ensembl"/>
</dbReference>
<dbReference type="GO" id="GO:0035374">
    <property type="term" value="F:chondroitin sulfate binding"/>
    <property type="evidence" value="ECO:0000250"/>
    <property type="project" value="UniProtKB"/>
</dbReference>
<dbReference type="GO" id="GO:0031005">
    <property type="term" value="F:filamin binding"/>
    <property type="evidence" value="ECO:0007669"/>
    <property type="project" value="Ensembl"/>
</dbReference>
<dbReference type="GO" id="GO:0016810">
    <property type="term" value="F:hydrolase activity, acting on carbon-nitrogen (but not peptide) bonds"/>
    <property type="evidence" value="ECO:0007669"/>
    <property type="project" value="InterPro"/>
</dbReference>
<dbReference type="GO" id="GO:0042802">
    <property type="term" value="F:identical protein binding"/>
    <property type="evidence" value="ECO:0000250"/>
    <property type="project" value="UniProtKB"/>
</dbReference>
<dbReference type="GO" id="GO:0051219">
    <property type="term" value="F:phosphoprotein binding"/>
    <property type="evidence" value="ECO:0000353"/>
    <property type="project" value="BHF-UCL"/>
</dbReference>
<dbReference type="GO" id="GO:0017124">
    <property type="term" value="F:SH3 domain binding"/>
    <property type="evidence" value="ECO:0000250"/>
    <property type="project" value="UniProtKB"/>
</dbReference>
<dbReference type="GO" id="GO:0051764">
    <property type="term" value="P:actin crosslink formation"/>
    <property type="evidence" value="ECO:0000250"/>
    <property type="project" value="UniProtKB"/>
</dbReference>
<dbReference type="GO" id="GO:0051017">
    <property type="term" value="P:actin filament bundle assembly"/>
    <property type="evidence" value="ECO:0000250"/>
    <property type="project" value="UniProtKB"/>
</dbReference>
<dbReference type="GO" id="GO:0071345">
    <property type="term" value="P:cellular response to cytokine stimulus"/>
    <property type="evidence" value="ECO:0000250"/>
    <property type="project" value="UniProtKB"/>
</dbReference>
<dbReference type="GO" id="GO:0030336">
    <property type="term" value="P:negative regulation of cell migration"/>
    <property type="evidence" value="ECO:0000250"/>
    <property type="project" value="UniProtKB"/>
</dbReference>
<dbReference type="GO" id="GO:0010977">
    <property type="term" value="P:negative regulation of neuron projection development"/>
    <property type="evidence" value="ECO:0000250"/>
    <property type="project" value="UniProtKB"/>
</dbReference>
<dbReference type="GO" id="GO:0007399">
    <property type="term" value="P:nervous system development"/>
    <property type="evidence" value="ECO:0000314"/>
    <property type="project" value="MGI"/>
</dbReference>
<dbReference type="GO" id="GO:0048666">
    <property type="term" value="P:neuron development"/>
    <property type="evidence" value="ECO:0007669"/>
    <property type="project" value="Ensembl"/>
</dbReference>
<dbReference type="GO" id="GO:0051491">
    <property type="term" value="P:positive regulation of filopodium assembly"/>
    <property type="evidence" value="ECO:0000250"/>
    <property type="project" value="UniProtKB"/>
</dbReference>
<dbReference type="GO" id="GO:0010976">
    <property type="term" value="P:positive regulation of neuron projection development"/>
    <property type="evidence" value="ECO:0000250"/>
    <property type="project" value="UniProtKB"/>
</dbReference>
<dbReference type="GO" id="GO:0048678">
    <property type="term" value="P:response to axon injury"/>
    <property type="evidence" value="ECO:0000250"/>
    <property type="project" value="UniProtKB"/>
</dbReference>
<dbReference type="CDD" id="cd01314">
    <property type="entry name" value="D-HYD"/>
    <property type="match status" value="1"/>
</dbReference>
<dbReference type="FunFam" id="2.30.40.10:FF:000021">
    <property type="entry name" value="Dihydropyrimidinase-related protein 2"/>
    <property type="match status" value="1"/>
</dbReference>
<dbReference type="FunFam" id="3.20.20.140:FF:000174">
    <property type="entry name" value="Dihydropyrimidinase-related protein 2"/>
    <property type="match status" value="1"/>
</dbReference>
<dbReference type="Gene3D" id="3.20.20.140">
    <property type="entry name" value="Metal-dependent hydrolases"/>
    <property type="match status" value="1"/>
</dbReference>
<dbReference type="Gene3D" id="2.30.40.10">
    <property type="entry name" value="Urease, subunit C, domain 1"/>
    <property type="match status" value="1"/>
</dbReference>
<dbReference type="InterPro" id="IPR006680">
    <property type="entry name" value="Amidohydro-rel"/>
</dbReference>
<dbReference type="InterPro" id="IPR011778">
    <property type="entry name" value="Hydantoinase/dihydroPyrase"/>
</dbReference>
<dbReference type="InterPro" id="IPR011059">
    <property type="entry name" value="Metal-dep_hydrolase_composite"/>
</dbReference>
<dbReference type="InterPro" id="IPR032466">
    <property type="entry name" value="Metal_Hydrolase"/>
</dbReference>
<dbReference type="InterPro" id="IPR050378">
    <property type="entry name" value="Metallo-dep_Hydrolases_sf"/>
</dbReference>
<dbReference type="NCBIfam" id="TIGR02033">
    <property type="entry name" value="D-hydantoinase"/>
    <property type="match status" value="1"/>
</dbReference>
<dbReference type="PANTHER" id="PTHR11647:SF57">
    <property type="entry name" value="DIHYDROPYRIMIDINASE-RELATED PROTEIN 3"/>
    <property type="match status" value="1"/>
</dbReference>
<dbReference type="PANTHER" id="PTHR11647">
    <property type="entry name" value="HYDRANTOINASE/DIHYDROPYRIMIDINASE FAMILY MEMBER"/>
    <property type="match status" value="1"/>
</dbReference>
<dbReference type="Pfam" id="PF01979">
    <property type="entry name" value="Amidohydro_1"/>
    <property type="match status" value="1"/>
</dbReference>
<dbReference type="SUPFAM" id="SSF51338">
    <property type="entry name" value="Composite domain of metallo-dependent hydrolases"/>
    <property type="match status" value="2"/>
</dbReference>
<dbReference type="SUPFAM" id="SSF51556">
    <property type="entry name" value="Metallo-dependent hydrolases"/>
    <property type="match status" value="1"/>
</dbReference>
<accession>Q62188</accession>
<protein>
    <recommendedName>
        <fullName>Dihydropyrimidinase-related protein 3</fullName>
        <shortName>DRP-3</shortName>
    </recommendedName>
    <alternativeName>
        <fullName>Unc-33-like phosphoprotein 1</fullName>
        <shortName>ULIP-1</shortName>
    </alternativeName>
</protein>
<comment type="function">
    <text evidence="1">Necessary for signaling by class 3 semaphorins and subsequent remodeling of the cytoskeleton. Plays a role in axon guidance, neuronal growth cone collapse and cell migration (By similarity).</text>
</comment>
<comment type="subunit">
    <text evidence="2 3">Homotetramer, and heterotetramer with CRMP1, DPYSL2, DPYSL4 or DPYSL5. Interacts with synaptic vesicle protein 2 and SH3A domain of intersectin (By similarity). Interacts with FLNA (By similarity).</text>
</comment>
<comment type="subcellular location">
    <subcellularLocation>
        <location evidence="1">Cytoplasm</location>
    </subcellularLocation>
    <subcellularLocation>
        <location evidence="1">Cell projection</location>
        <location evidence="1">Growth cone</location>
    </subcellularLocation>
    <text evidence="1">Colocalizes with synaptic vesicle protein 2 in the central region of the growth cone.</text>
</comment>
<comment type="PTM">
    <text evidence="1">Phosphorylation on Ser-522 by DYRK2 promotes subsequent phosphorylation on Thr-509, Thr-514 and Ser-518 by GSK3.</text>
</comment>
<comment type="similarity">
    <text evidence="5">Belongs to the metallo-dependent hydrolases superfamily. Hydantoinase/dihydropyrimidinase family.</text>
</comment>
<comment type="caution">
    <text evidence="5">Lacks most of the conserved residues that are essential for binding the metal cofactor and hence for dihydropyrimidinase activity. Its enzyme activity is therefore unsure.</text>
</comment>